<reference key="1">
    <citation type="journal article" date="2000" name="Plant Cell">
        <title>Reduced levels of chloroplast FtsH protein in tobacco mosaic virus-infected tobacco leaves accelerate the hypersensitive reaction.</title>
        <authorList>
            <person name="Seo S."/>
            <person name="Okamoto M."/>
            <person name="Iwai T."/>
            <person name="Iwano M."/>
            <person name="Fukui K."/>
            <person name="Isogai A."/>
            <person name="Nakajima N."/>
            <person name="Ohashi Y."/>
        </authorList>
    </citation>
    <scope>NUCLEOTIDE SEQUENCE [MRNA]</scope>
</reference>
<gene>
    <name type="primary">FTSH</name>
</gene>
<comment type="function">
    <text evidence="1">Seems to act as an ATP-dependent zinc metallopeptidase.</text>
</comment>
<comment type="cofactor">
    <cofactor evidence="3">
        <name>Zn(2+)</name>
        <dbReference type="ChEBI" id="CHEBI:29105"/>
    </cofactor>
    <text evidence="3">Binds 1 zinc ion per subunit.</text>
</comment>
<comment type="subcellular location">
    <subcellularLocation>
        <location evidence="3">Plastid</location>
        <location evidence="3">Chloroplast membrane</location>
        <topology evidence="3">Multi-pass membrane protein</topology>
    </subcellularLocation>
</comment>
<comment type="similarity">
    <text evidence="3">In the N-terminal section; belongs to the AAA ATPase family.</text>
</comment>
<comment type="similarity">
    <text evidence="3">In the C-terminal section; belongs to the peptidase M41 family.</text>
</comment>
<evidence type="ECO:0000250" key="1"/>
<evidence type="ECO:0000255" key="2"/>
<evidence type="ECO:0000305" key="3"/>
<feature type="transit peptide" description="Chloroplast" evidence="2">
    <location>
        <begin position="1"/>
        <end status="unknown"/>
    </location>
</feature>
<feature type="chain" id="PRO_0000000247" description="ATP-dependent zinc metalloprotease FTSH, chloroplastic">
    <location>
        <begin status="unknown"/>
        <end position="714"/>
    </location>
</feature>
<feature type="transmembrane region" description="Helical" evidence="2">
    <location>
        <begin position="55"/>
        <end position="75"/>
    </location>
</feature>
<feature type="transmembrane region" description="Helical" evidence="2">
    <location>
        <begin position="196"/>
        <end position="216"/>
    </location>
</feature>
<feature type="active site" evidence="1">
    <location>
        <position position="516"/>
    </location>
</feature>
<feature type="binding site" evidence="2">
    <location>
        <begin position="293"/>
        <end position="300"/>
    </location>
    <ligand>
        <name>ATP</name>
        <dbReference type="ChEBI" id="CHEBI:30616"/>
    </ligand>
</feature>
<feature type="binding site" evidence="1">
    <location>
        <position position="515"/>
    </location>
    <ligand>
        <name>Zn(2+)</name>
        <dbReference type="ChEBI" id="CHEBI:29105"/>
        <note>catalytic</note>
    </ligand>
</feature>
<feature type="binding site" evidence="1">
    <location>
        <position position="519"/>
    </location>
    <ligand>
        <name>Zn(2+)</name>
        <dbReference type="ChEBI" id="CHEBI:29105"/>
        <note>catalytic</note>
    </ligand>
</feature>
<feature type="binding site" evidence="1">
    <location>
        <position position="596"/>
    </location>
    <ligand>
        <name>Zn(2+)</name>
        <dbReference type="ChEBI" id="CHEBI:29105"/>
        <note>catalytic</note>
    </ligand>
</feature>
<organism>
    <name type="scientific">Nicotiana tabacum</name>
    <name type="common">Common tobacco</name>
    <dbReference type="NCBI Taxonomy" id="4097"/>
    <lineage>
        <taxon>Eukaryota</taxon>
        <taxon>Viridiplantae</taxon>
        <taxon>Streptophyta</taxon>
        <taxon>Embryophyta</taxon>
        <taxon>Tracheophyta</taxon>
        <taxon>Spermatophyta</taxon>
        <taxon>Magnoliopsida</taxon>
        <taxon>eudicotyledons</taxon>
        <taxon>Gunneridae</taxon>
        <taxon>Pentapetalae</taxon>
        <taxon>asterids</taxon>
        <taxon>lamiids</taxon>
        <taxon>Solanales</taxon>
        <taxon>Solanaceae</taxon>
        <taxon>Nicotianoideae</taxon>
        <taxon>Nicotianeae</taxon>
        <taxon>Nicotiana</taxon>
    </lineage>
</organism>
<proteinExistence type="evidence at transcript level"/>
<keyword id="KW-0067">ATP-binding</keyword>
<keyword id="KW-0131">Cell cycle</keyword>
<keyword id="KW-0132">Cell division</keyword>
<keyword id="KW-0150">Chloroplast</keyword>
<keyword id="KW-0378">Hydrolase</keyword>
<keyword id="KW-0472">Membrane</keyword>
<keyword id="KW-0479">Metal-binding</keyword>
<keyword id="KW-0482">Metalloprotease</keyword>
<keyword id="KW-0547">Nucleotide-binding</keyword>
<keyword id="KW-0934">Plastid</keyword>
<keyword id="KW-0645">Protease</keyword>
<keyword id="KW-1185">Reference proteome</keyword>
<keyword id="KW-0809">Transit peptide</keyword>
<keyword id="KW-0812">Transmembrane</keyword>
<keyword id="KW-1133">Transmembrane helix</keyword>
<keyword id="KW-0862">Zinc</keyword>
<sequence length="714" mass="77111">MANSLLSSNFMGSQIFVSPPTPKTTKYFHFHSKRKSLIPQSILNKKPNSDNSKNIPSKAALAALLFSSITPHAYALDNTTPTVPTPRVIQAEAANPTTSNPFSQNIILNAPKPQAQTNPELPEVSQWRYSEFLNAVKKGKVERVRFSKDGSALQLTAVDGRRATVTVPNDPDLIDILAMNGVDISVSEGDSAGNGLFNLIGNLFPFIAFAGLFYLFQRSQGGPGGPGGLGGPMDFGRSKSKFQEVPETGVTFADVAGADQAKLELQEVVDFLKNPDKYTALGAKIPKGCLLVGPPGTGKTLLARAVAGEAGVPFFSCAASEFVELFVGVGASRVRDLFEKAKSKAPCIVFIDEIDAVGRQRGAGMGGGNDEREQTINQLLTEMDGFSGNSGVIVLAATNRPDVLDSALLRPGRFDRQVTVDRPDVAGRIKILQVHSRGKALTKDVDFEKIARRTPGYTGADLQNLMNEAAILAARRELKEISKDEISDALERIIAGPEKKNAVVSDEKKKLVAYHEAGHALVGALMPEYDPVAKISIIPRGQAGGLTFFAPSEERLESGLYSRSYLENQMAVALGERVAEEVIFGQDNVTTGASNDFMQVSRVARQMVERLGFSKKIGQVAIGGGGGNPFLGQQMSTQKDYSMATADVVDAEVRELVERAYERATEIITTHIDILHKLAQLLIEKETVDGEEFMSLFIDGKAELYISWVSKEED</sequence>
<name>FTSH_TOBAC</name>
<dbReference type="EC" id="3.4.24.-"/>
<dbReference type="EMBL" id="AB017480">
    <property type="protein sequence ID" value="BAA33755.2"/>
    <property type="molecule type" value="mRNA"/>
</dbReference>
<dbReference type="RefSeq" id="NP_001313011.1">
    <property type="nucleotide sequence ID" value="NM_001326082.1"/>
</dbReference>
<dbReference type="SMR" id="O82150"/>
<dbReference type="STRING" id="4097.O82150"/>
<dbReference type="MEROPS" id="M41.020"/>
<dbReference type="PaxDb" id="4097-O82150"/>
<dbReference type="GeneID" id="107821735"/>
<dbReference type="KEGG" id="nta:107821735"/>
<dbReference type="OrthoDB" id="1413014at2759"/>
<dbReference type="Proteomes" id="UP000084051">
    <property type="component" value="Unplaced"/>
</dbReference>
<dbReference type="GO" id="GO:0031969">
    <property type="term" value="C:chloroplast membrane"/>
    <property type="evidence" value="ECO:0007669"/>
    <property type="project" value="UniProtKB-SubCell"/>
</dbReference>
<dbReference type="GO" id="GO:0009535">
    <property type="term" value="C:chloroplast thylakoid membrane"/>
    <property type="evidence" value="ECO:0000318"/>
    <property type="project" value="GO_Central"/>
</dbReference>
<dbReference type="GO" id="GO:0005524">
    <property type="term" value="F:ATP binding"/>
    <property type="evidence" value="ECO:0007669"/>
    <property type="project" value="UniProtKB-KW"/>
</dbReference>
<dbReference type="GO" id="GO:0016887">
    <property type="term" value="F:ATP hydrolysis activity"/>
    <property type="evidence" value="ECO:0007669"/>
    <property type="project" value="InterPro"/>
</dbReference>
<dbReference type="GO" id="GO:0004176">
    <property type="term" value="F:ATP-dependent peptidase activity"/>
    <property type="evidence" value="ECO:0000318"/>
    <property type="project" value="GO_Central"/>
</dbReference>
<dbReference type="GO" id="GO:0046872">
    <property type="term" value="F:metal ion binding"/>
    <property type="evidence" value="ECO:0007669"/>
    <property type="project" value="UniProtKB-KW"/>
</dbReference>
<dbReference type="GO" id="GO:0004222">
    <property type="term" value="F:metalloendopeptidase activity"/>
    <property type="evidence" value="ECO:0007669"/>
    <property type="project" value="InterPro"/>
</dbReference>
<dbReference type="GO" id="GO:0051301">
    <property type="term" value="P:cell division"/>
    <property type="evidence" value="ECO:0007669"/>
    <property type="project" value="UniProtKB-KW"/>
</dbReference>
<dbReference type="GO" id="GO:0006508">
    <property type="term" value="P:proteolysis"/>
    <property type="evidence" value="ECO:0000318"/>
    <property type="project" value="GO_Central"/>
</dbReference>
<dbReference type="CDD" id="cd19501">
    <property type="entry name" value="RecA-like_FtsH"/>
    <property type="match status" value="1"/>
</dbReference>
<dbReference type="FunFam" id="1.10.8.60:FF:000001">
    <property type="entry name" value="ATP-dependent zinc metalloprotease FtsH"/>
    <property type="match status" value="1"/>
</dbReference>
<dbReference type="FunFam" id="1.20.58.760:FF:000001">
    <property type="entry name" value="ATP-dependent zinc metalloprotease FtsH"/>
    <property type="match status" value="1"/>
</dbReference>
<dbReference type="FunFam" id="3.40.50.300:FF:000001">
    <property type="entry name" value="ATP-dependent zinc metalloprotease FtsH"/>
    <property type="match status" value="1"/>
</dbReference>
<dbReference type="FunFam" id="3.30.720.210:FF:000003">
    <property type="entry name" value="ATP-dependent zinc metalloprotease FTSH, chloroplastic"/>
    <property type="match status" value="1"/>
</dbReference>
<dbReference type="Gene3D" id="1.10.8.60">
    <property type="match status" value="1"/>
</dbReference>
<dbReference type="Gene3D" id="3.30.720.210">
    <property type="match status" value="1"/>
</dbReference>
<dbReference type="Gene3D" id="3.40.50.300">
    <property type="entry name" value="P-loop containing nucleotide triphosphate hydrolases"/>
    <property type="match status" value="1"/>
</dbReference>
<dbReference type="Gene3D" id="1.20.58.760">
    <property type="entry name" value="Peptidase M41"/>
    <property type="match status" value="1"/>
</dbReference>
<dbReference type="HAMAP" id="MF_01458">
    <property type="entry name" value="FtsH"/>
    <property type="match status" value="1"/>
</dbReference>
<dbReference type="InterPro" id="IPR003593">
    <property type="entry name" value="AAA+_ATPase"/>
</dbReference>
<dbReference type="InterPro" id="IPR041569">
    <property type="entry name" value="AAA_lid_3"/>
</dbReference>
<dbReference type="InterPro" id="IPR003959">
    <property type="entry name" value="ATPase_AAA_core"/>
</dbReference>
<dbReference type="InterPro" id="IPR003960">
    <property type="entry name" value="ATPase_AAA_CS"/>
</dbReference>
<dbReference type="InterPro" id="IPR005936">
    <property type="entry name" value="FtsH"/>
</dbReference>
<dbReference type="InterPro" id="IPR027417">
    <property type="entry name" value="P-loop_NTPase"/>
</dbReference>
<dbReference type="InterPro" id="IPR000642">
    <property type="entry name" value="Peptidase_M41"/>
</dbReference>
<dbReference type="InterPro" id="IPR037219">
    <property type="entry name" value="Peptidase_M41-like"/>
</dbReference>
<dbReference type="NCBIfam" id="TIGR01241">
    <property type="entry name" value="FtsH_fam"/>
    <property type="match status" value="1"/>
</dbReference>
<dbReference type="PANTHER" id="PTHR23076:SF132">
    <property type="entry name" value="ATP-DEPENDENT ZINC METALLOPROTEASE FTSH, CHLOROPLASTIC"/>
    <property type="match status" value="1"/>
</dbReference>
<dbReference type="PANTHER" id="PTHR23076">
    <property type="entry name" value="METALLOPROTEASE M41 FTSH"/>
    <property type="match status" value="1"/>
</dbReference>
<dbReference type="Pfam" id="PF00004">
    <property type="entry name" value="AAA"/>
    <property type="match status" value="1"/>
</dbReference>
<dbReference type="Pfam" id="PF17862">
    <property type="entry name" value="AAA_lid_3"/>
    <property type="match status" value="1"/>
</dbReference>
<dbReference type="Pfam" id="PF01434">
    <property type="entry name" value="Peptidase_M41"/>
    <property type="match status" value="1"/>
</dbReference>
<dbReference type="SMART" id="SM00382">
    <property type="entry name" value="AAA"/>
    <property type="match status" value="1"/>
</dbReference>
<dbReference type="SUPFAM" id="SSF140990">
    <property type="entry name" value="FtsH protease domain-like"/>
    <property type="match status" value="1"/>
</dbReference>
<dbReference type="SUPFAM" id="SSF52540">
    <property type="entry name" value="P-loop containing nucleoside triphosphate hydrolases"/>
    <property type="match status" value="1"/>
</dbReference>
<dbReference type="PROSITE" id="PS00674">
    <property type="entry name" value="AAA"/>
    <property type="match status" value="1"/>
</dbReference>
<accession>O82150</accession>
<protein>
    <recommendedName>
        <fullName>ATP-dependent zinc metalloprotease FTSH, chloroplastic</fullName>
        <ecNumber>3.4.24.-</ecNumber>
    </recommendedName>
    <alternativeName>
        <fullName>DS9</fullName>
    </alternativeName>
</protein>